<protein>
    <recommendedName>
        <fullName evidence="1">Probable potassium transport system protein Kup 2</fullName>
    </recommendedName>
</protein>
<comment type="function">
    <text evidence="1">Transport of potassium into the cell. Likely operates as a K(+):H(+) symporter.</text>
</comment>
<comment type="catalytic activity">
    <reaction evidence="1">
        <text>K(+)(in) + H(+)(in) = K(+)(out) + H(+)(out)</text>
        <dbReference type="Rhea" id="RHEA:28490"/>
        <dbReference type="ChEBI" id="CHEBI:15378"/>
        <dbReference type="ChEBI" id="CHEBI:29103"/>
    </reaction>
    <physiologicalReaction direction="right-to-left" evidence="1">
        <dbReference type="Rhea" id="RHEA:28492"/>
    </physiologicalReaction>
</comment>
<comment type="subcellular location">
    <subcellularLocation>
        <location evidence="1">Cell inner membrane</location>
        <topology evidence="1">Multi-pass membrane protein</topology>
    </subcellularLocation>
</comment>
<comment type="similarity">
    <text evidence="1">Belongs to the HAK/KUP transporter (TC 2.A.72) family.</text>
</comment>
<proteinExistence type="inferred from homology"/>
<feature type="chain" id="PRO_0000279800" description="Probable potassium transport system protein Kup 2">
    <location>
        <begin position="1"/>
        <end position="643"/>
    </location>
</feature>
<feature type="transmembrane region" description="Helical" evidence="1">
    <location>
        <begin position="27"/>
        <end position="47"/>
    </location>
</feature>
<feature type="transmembrane region" description="Helical" evidence="1">
    <location>
        <begin position="70"/>
        <end position="90"/>
    </location>
</feature>
<feature type="transmembrane region" description="Helical" evidence="1">
    <location>
        <begin position="120"/>
        <end position="140"/>
    </location>
</feature>
<feature type="transmembrane region" description="Helical" evidence="1">
    <location>
        <begin position="157"/>
        <end position="177"/>
    </location>
</feature>
<feature type="transmembrane region" description="Helical" evidence="1">
    <location>
        <begin position="185"/>
        <end position="205"/>
    </location>
</feature>
<feature type="transmembrane region" description="Helical" evidence="1">
    <location>
        <begin position="231"/>
        <end position="251"/>
    </location>
</feature>
<feature type="transmembrane region" description="Helical" evidence="1">
    <location>
        <begin position="267"/>
        <end position="287"/>
    </location>
</feature>
<feature type="transmembrane region" description="Helical" evidence="1">
    <location>
        <begin position="300"/>
        <end position="320"/>
    </location>
</feature>
<feature type="transmembrane region" description="Helical" evidence="1">
    <location>
        <begin position="357"/>
        <end position="377"/>
    </location>
</feature>
<feature type="transmembrane region" description="Helical" evidence="1">
    <location>
        <begin position="389"/>
        <end position="409"/>
    </location>
</feature>
<feature type="transmembrane region" description="Helical" evidence="1">
    <location>
        <begin position="419"/>
        <end position="439"/>
    </location>
</feature>
<feature type="transmembrane region" description="Helical" evidence="1">
    <location>
        <begin position="440"/>
        <end position="460"/>
    </location>
</feature>
<feature type="region of interest" description="Disordered" evidence="2">
    <location>
        <begin position="1"/>
        <end position="20"/>
    </location>
</feature>
<accession>Q2W905</accession>
<organism>
    <name type="scientific">Paramagnetospirillum magneticum (strain ATCC 700264 / AMB-1)</name>
    <name type="common">Magnetospirillum magneticum</name>
    <dbReference type="NCBI Taxonomy" id="342108"/>
    <lineage>
        <taxon>Bacteria</taxon>
        <taxon>Pseudomonadati</taxon>
        <taxon>Pseudomonadota</taxon>
        <taxon>Alphaproteobacteria</taxon>
        <taxon>Rhodospirillales</taxon>
        <taxon>Magnetospirillaceae</taxon>
        <taxon>Paramagnetospirillum</taxon>
    </lineage>
</organism>
<reference key="1">
    <citation type="journal article" date="2005" name="DNA Res.">
        <title>Complete genome sequence of the facultative anaerobic magnetotactic bacterium Magnetospirillum sp. strain AMB-1.</title>
        <authorList>
            <person name="Matsunaga T."/>
            <person name="Okamura Y."/>
            <person name="Fukuda Y."/>
            <person name="Wahyudi A.T."/>
            <person name="Murase Y."/>
            <person name="Takeyama H."/>
        </authorList>
    </citation>
    <scope>NUCLEOTIDE SEQUENCE [LARGE SCALE GENOMIC DNA]</scope>
    <source>
        <strain>ATCC 700264 / AMB-1</strain>
    </source>
</reference>
<keyword id="KW-0997">Cell inner membrane</keyword>
<keyword id="KW-1003">Cell membrane</keyword>
<keyword id="KW-0406">Ion transport</keyword>
<keyword id="KW-0472">Membrane</keyword>
<keyword id="KW-0630">Potassium</keyword>
<keyword id="KW-0633">Potassium transport</keyword>
<keyword id="KW-0769">Symport</keyword>
<keyword id="KW-0812">Transmembrane</keyword>
<keyword id="KW-1133">Transmembrane helix</keyword>
<keyword id="KW-0813">Transport</keyword>
<evidence type="ECO:0000255" key="1">
    <source>
        <dbReference type="HAMAP-Rule" id="MF_01522"/>
    </source>
</evidence>
<evidence type="ECO:0000256" key="2">
    <source>
        <dbReference type="SAM" id="MobiDB-lite"/>
    </source>
</evidence>
<sequence length="643" mass="70049">MSSHVPSFLRGTPDMTAHGGDGKSRNVAGLMLAAIGVVFGDIGTSPLYAMKETFSGPHAVAMDKGNILGVLSLVFWAITIIVSFKYVIIIMRADNRGEGGSLALLALVSHAAESNRRLSLMVSALGIFAAALFYGDSIITPAISVLSAVEGLQVAAPHLEQWVVPLTIVILFVLFAIQSHGTDLVGKMFGPVMLVWFLTLAILGIRNLSHAPSVLAALSPHYAISFLFREGWHAFLALGSVVLAVTGAEALYTDMGHFGRLPIRLAWYLLVLPALILNYFGQGALLIYNPEAIANPFFNLAPASLALPLVILATLATVIASQAVISGAFSVTRQAIQLGFLPRMEIIHTSEEEMGQIYLPFVNWLLMCMVMVLVVGFKTSSNLAAAYGVAVTGTMVIDALLVGTVMLLIWKWNPRKVKWLIGGFLVVDLAFFLANSIKIPDGGWFPLVVGGLLFTILTTWKDGRKRLLARLKADALPVEDFLASLSDRVPRVPGTAVFLTGTSEGVPIALLHNMKHNKIVHERVVLLTVIVEEVPFVPEERRLENRLLAPNFHRVFLRYGFMESPNIPKALAHARTDQLGFFYEPMSVSYFVSRETLLPTEKPGLRGLRDTLFATLARMATSAMDFFHLPSNRVVELGSQIEI</sequence>
<gene>
    <name evidence="1" type="primary">kup2</name>
    <name type="ordered locus">amb0866</name>
</gene>
<name>KUP2_PARM1</name>
<dbReference type="EMBL" id="AP007255">
    <property type="protein sequence ID" value="BAE49670.1"/>
    <property type="molecule type" value="Genomic_DNA"/>
</dbReference>
<dbReference type="STRING" id="342108.amb0866"/>
<dbReference type="KEGG" id="mag:amb0866"/>
<dbReference type="HOGENOM" id="CLU_008142_4_2_5"/>
<dbReference type="Proteomes" id="UP000007058">
    <property type="component" value="Chromosome"/>
</dbReference>
<dbReference type="GO" id="GO:0005886">
    <property type="term" value="C:plasma membrane"/>
    <property type="evidence" value="ECO:0007669"/>
    <property type="project" value="UniProtKB-SubCell"/>
</dbReference>
<dbReference type="GO" id="GO:0015079">
    <property type="term" value="F:potassium ion transmembrane transporter activity"/>
    <property type="evidence" value="ECO:0007669"/>
    <property type="project" value="UniProtKB-UniRule"/>
</dbReference>
<dbReference type="GO" id="GO:0015293">
    <property type="term" value="F:symporter activity"/>
    <property type="evidence" value="ECO:0007669"/>
    <property type="project" value="UniProtKB-UniRule"/>
</dbReference>
<dbReference type="HAMAP" id="MF_01522">
    <property type="entry name" value="Kup"/>
    <property type="match status" value="1"/>
</dbReference>
<dbReference type="InterPro" id="IPR003855">
    <property type="entry name" value="K+_transporter"/>
</dbReference>
<dbReference type="InterPro" id="IPR053952">
    <property type="entry name" value="K_trans_C"/>
</dbReference>
<dbReference type="InterPro" id="IPR053951">
    <property type="entry name" value="K_trans_N"/>
</dbReference>
<dbReference type="InterPro" id="IPR023051">
    <property type="entry name" value="Kup"/>
</dbReference>
<dbReference type="PANTHER" id="PTHR30540:SF79">
    <property type="entry name" value="LOW AFFINITY POTASSIUM TRANSPORT SYSTEM PROTEIN KUP"/>
    <property type="match status" value="1"/>
</dbReference>
<dbReference type="PANTHER" id="PTHR30540">
    <property type="entry name" value="OSMOTIC STRESS POTASSIUM TRANSPORTER"/>
    <property type="match status" value="1"/>
</dbReference>
<dbReference type="Pfam" id="PF02705">
    <property type="entry name" value="K_trans"/>
    <property type="match status" value="1"/>
</dbReference>
<dbReference type="Pfam" id="PF22776">
    <property type="entry name" value="K_trans_C"/>
    <property type="match status" value="1"/>
</dbReference>